<dbReference type="EMBL" id="AK010878">
    <property type="status" value="NOT_ANNOTATED_CDS"/>
    <property type="molecule type" value="mRNA"/>
</dbReference>
<dbReference type="CCDS" id="CCDS49148.1"/>
<dbReference type="RefSeq" id="NP_001136410.1">
    <property type="nucleotide sequence ID" value="NM_001142938.1"/>
</dbReference>
<dbReference type="SMR" id="P0C8B4"/>
<dbReference type="BioGRID" id="950218">
    <property type="interactions" value="3"/>
</dbReference>
<dbReference type="FunCoup" id="P0C8B4">
    <property type="interactions" value="599"/>
</dbReference>
<dbReference type="STRING" id="10090.ENSMUSP00000136425"/>
<dbReference type="PhosphoSitePlus" id="P0C8B4"/>
<dbReference type="PaxDb" id="10090-ENSMUSP00000136425"/>
<dbReference type="ProteomicsDB" id="271252"/>
<dbReference type="Ensembl" id="ENSMUST00000173969.2">
    <property type="protein sequence ID" value="ENSMUSP00000136425.2"/>
    <property type="gene ID" value="ENSMUSG00000091931.6"/>
</dbReference>
<dbReference type="GeneID" id="100233175"/>
<dbReference type="KEGG" id="mmu:100233175"/>
<dbReference type="UCSC" id="uc011yqr.1">
    <property type="organism name" value="mouse"/>
</dbReference>
<dbReference type="AGR" id="MGI:4845848"/>
<dbReference type="CTD" id="84520"/>
<dbReference type="MGI" id="MGI:4845848">
    <property type="gene designation" value="Gon7"/>
</dbReference>
<dbReference type="VEuPathDB" id="HostDB:ENSMUSG00000091931"/>
<dbReference type="eggNOG" id="ENOG502SW4V">
    <property type="taxonomic scope" value="Eukaryota"/>
</dbReference>
<dbReference type="GeneTree" id="ENSGT00490000044274"/>
<dbReference type="HOGENOM" id="CLU_180906_0_0_1"/>
<dbReference type="InParanoid" id="P0C8B4"/>
<dbReference type="OMA" id="KTCVDGP"/>
<dbReference type="OrthoDB" id="72930at9989"/>
<dbReference type="PhylomeDB" id="P0C8B4"/>
<dbReference type="BioGRID-ORCS" id="100233175">
    <property type="hits" value="2 hits in 53 CRISPR screens"/>
</dbReference>
<dbReference type="PRO" id="PR:P0C8B4"/>
<dbReference type="Proteomes" id="UP000000589">
    <property type="component" value="Chromosome 12"/>
</dbReference>
<dbReference type="RNAct" id="P0C8B4">
    <property type="molecule type" value="protein"/>
</dbReference>
<dbReference type="Bgee" id="ENSMUSG00000091931">
    <property type="expression patterns" value="Expressed in peripheral nervous system and 76 other cell types or tissues"/>
</dbReference>
<dbReference type="ExpressionAtlas" id="P0C8B4">
    <property type="expression patterns" value="baseline and differential"/>
</dbReference>
<dbReference type="GO" id="GO:0005829">
    <property type="term" value="C:cytosol"/>
    <property type="evidence" value="ECO:0007669"/>
    <property type="project" value="Ensembl"/>
</dbReference>
<dbReference type="GO" id="GO:0000408">
    <property type="term" value="C:EKC/KEOPS complex"/>
    <property type="evidence" value="ECO:0000250"/>
    <property type="project" value="UniProtKB"/>
</dbReference>
<dbReference type="GO" id="GO:0005730">
    <property type="term" value="C:nucleolus"/>
    <property type="evidence" value="ECO:0007669"/>
    <property type="project" value="Ensembl"/>
</dbReference>
<dbReference type="GO" id="GO:0005654">
    <property type="term" value="C:nucleoplasm"/>
    <property type="evidence" value="ECO:0007669"/>
    <property type="project" value="Ensembl"/>
</dbReference>
<dbReference type="GO" id="GO:0005634">
    <property type="term" value="C:nucleus"/>
    <property type="evidence" value="ECO:0000250"/>
    <property type="project" value="UniProtKB"/>
</dbReference>
<dbReference type="GO" id="GO:0002949">
    <property type="term" value="P:tRNA threonylcarbamoyladenosine modification"/>
    <property type="evidence" value="ECO:0000250"/>
    <property type="project" value="UniProtKB"/>
</dbReference>
<dbReference type="InterPro" id="IPR027893">
    <property type="entry name" value="GON7_meta"/>
</dbReference>
<dbReference type="PANTHER" id="PTHR37363">
    <property type="entry name" value="EKC/KEOPS COMPLEX SUBUNIT GON7"/>
    <property type="match status" value="1"/>
</dbReference>
<dbReference type="PANTHER" id="PTHR37363:SF1">
    <property type="entry name" value="EKC_KEOPS COMPLEX SUBUNIT GON7"/>
    <property type="match status" value="1"/>
</dbReference>
<dbReference type="Pfam" id="PF15387">
    <property type="entry name" value="DUF4611"/>
    <property type="match status" value="1"/>
</dbReference>
<feature type="chain" id="PRO_0000352801" description="EKC/KEOPS complex subunit GON7">
    <location>
        <begin position="1"/>
        <end position="98"/>
    </location>
</feature>
<feature type="region of interest" description="Disordered" evidence="2">
    <location>
        <begin position="55"/>
        <end position="98"/>
    </location>
</feature>
<feature type="compositionally biased region" description="Acidic residues" evidence="2">
    <location>
        <begin position="61"/>
        <end position="79"/>
    </location>
</feature>
<feature type="modified residue" description="N-acetylmethionine" evidence="1">
    <location>
        <position position="1"/>
    </location>
</feature>
<sequence length="98" mass="10346">MELSGEYVGCDGEPQRLRVSCEASGDADPLQSLSAGVVRMKELVAEFFGTLVEQDAQGLAEDPDDALDGDDEDDAEDENNSGRTNSDGPSAKRPKPAS</sequence>
<comment type="function">
    <text evidence="1">Component of the EKC/KEOPS complex that is required for the formation of a threonylcarbamoyl group on adenosine at position 37 (t(6)A37) in tRNAs that read codons beginning with adenine. The complex is probably involved in the transfer of the threonylcarbamoyl moiety of threonylcarbamoyl-AMP (TC-AMP) to the N6 group of A37. GON7 plays a supporting role to the catalytic subunit OSGEP in the complex.</text>
</comment>
<comment type="subunit">
    <text evidence="1">Component of the EKC/KEOPS complex composed of at least GON7, TP53RK, TPRKB, OSGEP and LAGE3; the whole complex dimerizes.</text>
</comment>
<comment type="subcellular location">
    <subcellularLocation>
        <location evidence="1">Nucleus</location>
    </subcellularLocation>
</comment>
<keyword id="KW-0007">Acetylation</keyword>
<keyword id="KW-0539">Nucleus</keyword>
<keyword id="KW-1185">Reference proteome</keyword>
<reference key="1">
    <citation type="journal article" date="2005" name="Science">
        <title>The transcriptional landscape of the mammalian genome.</title>
        <authorList>
            <person name="Carninci P."/>
            <person name="Kasukawa T."/>
            <person name="Katayama S."/>
            <person name="Gough J."/>
            <person name="Frith M.C."/>
            <person name="Maeda N."/>
            <person name="Oyama R."/>
            <person name="Ravasi T."/>
            <person name="Lenhard B."/>
            <person name="Wells C."/>
            <person name="Kodzius R."/>
            <person name="Shimokawa K."/>
            <person name="Bajic V.B."/>
            <person name="Brenner S.E."/>
            <person name="Batalov S."/>
            <person name="Forrest A.R."/>
            <person name="Zavolan M."/>
            <person name="Davis M.J."/>
            <person name="Wilming L.G."/>
            <person name="Aidinis V."/>
            <person name="Allen J.E."/>
            <person name="Ambesi-Impiombato A."/>
            <person name="Apweiler R."/>
            <person name="Aturaliya R.N."/>
            <person name="Bailey T.L."/>
            <person name="Bansal M."/>
            <person name="Baxter L."/>
            <person name="Beisel K.W."/>
            <person name="Bersano T."/>
            <person name="Bono H."/>
            <person name="Chalk A.M."/>
            <person name="Chiu K.P."/>
            <person name="Choudhary V."/>
            <person name="Christoffels A."/>
            <person name="Clutterbuck D.R."/>
            <person name="Crowe M.L."/>
            <person name="Dalla E."/>
            <person name="Dalrymple B.P."/>
            <person name="de Bono B."/>
            <person name="Della Gatta G."/>
            <person name="di Bernardo D."/>
            <person name="Down T."/>
            <person name="Engstrom P."/>
            <person name="Fagiolini M."/>
            <person name="Faulkner G."/>
            <person name="Fletcher C.F."/>
            <person name="Fukushima T."/>
            <person name="Furuno M."/>
            <person name="Futaki S."/>
            <person name="Gariboldi M."/>
            <person name="Georgii-Hemming P."/>
            <person name="Gingeras T.R."/>
            <person name="Gojobori T."/>
            <person name="Green R.E."/>
            <person name="Gustincich S."/>
            <person name="Harbers M."/>
            <person name="Hayashi Y."/>
            <person name="Hensch T.K."/>
            <person name="Hirokawa N."/>
            <person name="Hill D."/>
            <person name="Huminiecki L."/>
            <person name="Iacono M."/>
            <person name="Ikeo K."/>
            <person name="Iwama A."/>
            <person name="Ishikawa T."/>
            <person name="Jakt M."/>
            <person name="Kanapin A."/>
            <person name="Katoh M."/>
            <person name="Kawasawa Y."/>
            <person name="Kelso J."/>
            <person name="Kitamura H."/>
            <person name="Kitano H."/>
            <person name="Kollias G."/>
            <person name="Krishnan S.P."/>
            <person name="Kruger A."/>
            <person name="Kummerfeld S.K."/>
            <person name="Kurochkin I.V."/>
            <person name="Lareau L.F."/>
            <person name="Lazarevic D."/>
            <person name="Lipovich L."/>
            <person name="Liu J."/>
            <person name="Liuni S."/>
            <person name="McWilliam S."/>
            <person name="Madan Babu M."/>
            <person name="Madera M."/>
            <person name="Marchionni L."/>
            <person name="Matsuda H."/>
            <person name="Matsuzawa S."/>
            <person name="Miki H."/>
            <person name="Mignone F."/>
            <person name="Miyake S."/>
            <person name="Morris K."/>
            <person name="Mottagui-Tabar S."/>
            <person name="Mulder N."/>
            <person name="Nakano N."/>
            <person name="Nakauchi H."/>
            <person name="Ng P."/>
            <person name="Nilsson R."/>
            <person name="Nishiguchi S."/>
            <person name="Nishikawa S."/>
            <person name="Nori F."/>
            <person name="Ohara O."/>
            <person name="Okazaki Y."/>
            <person name="Orlando V."/>
            <person name="Pang K.C."/>
            <person name="Pavan W.J."/>
            <person name="Pavesi G."/>
            <person name="Pesole G."/>
            <person name="Petrovsky N."/>
            <person name="Piazza S."/>
            <person name="Reed J."/>
            <person name="Reid J.F."/>
            <person name="Ring B.Z."/>
            <person name="Ringwald M."/>
            <person name="Rost B."/>
            <person name="Ruan Y."/>
            <person name="Salzberg S.L."/>
            <person name="Sandelin A."/>
            <person name="Schneider C."/>
            <person name="Schoenbach C."/>
            <person name="Sekiguchi K."/>
            <person name="Semple C.A."/>
            <person name="Seno S."/>
            <person name="Sessa L."/>
            <person name="Sheng Y."/>
            <person name="Shibata Y."/>
            <person name="Shimada H."/>
            <person name="Shimada K."/>
            <person name="Silva D."/>
            <person name="Sinclair B."/>
            <person name="Sperling S."/>
            <person name="Stupka E."/>
            <person name="Sugiura K."/>
            <person name="Sultana R."/>
            <person name="Takenaka Y."/>
            <person name="Taki K."/>
            <person name="Tammoja K."/>
            <person name="Tan S.L."/>
            <person name="Tang S."/>
            <person name="Taylor M.S."/>
            <person name="Tegner J."/>
            <person name="Teichmann S.A."/>
            <person name="Ueda H.R."/>
            <person name="van Nimwegen E."/>
            <person name="Verardo R."/>
            <person name="Wei C.L."/>
            <person name="Yagi K."/>
            <person name="Yamanishi H."/>
            <person name="Zabarovsky E."/>
            <person name="Zhu S."/>
            <person name="Zimmer A."/>
            <person name="Hide W."/>
            <person name="Bult C."/>
            <person name="Grimmond S.M."/>
            <person name="Teasdale R.D."/>
            <person name="Liu E.T."/>
            <person name="Brusic V."/>
            <person name="Quackenbush J."/>
            <person name="Wahlestedt C."/>
            <person name="Mattick J.S."/>
            <person name="Hume D.A."/>
            <person name="Kai C."/>
            <person name="Sasaki D."/>
            <person name="Tomaru Y."/>
            <person name="Fukuda S."/>
            <person name="Kanamori-Katayama M."/>
            <person name="Suzuki M."/>
            <person name="Aoki J."/>
            <person name="Arakawa T."/>
            <person name="Iida J."/>
            <person name="Imamura K."/>
            <person name="Itoh M."/>
            <person name="Kato T."/>
            <person name="Kawaji H."/>
            <person name="Kawagashira N."/>
            <person name="Kawashima T."/>
            <person name="Kojima M."/>
            <person name="Kondo S."/>
            <person name="Konno H."/>
            <person name="Nakano K."/>
            <person name="Ninomiya N."/>
            <person name="Nishio T."/>
            <person name="Okada M."/>
            <person name="Plessy C."/>
            <person name="Shibata K."/>
            <person name="Shiraki T."/>
            <person name="Suzuki S."/>
            <person name="Tagami M."/>
            <person name="Waki K."/>
            <person name="Watahiki A."/>
            <person name="Okamura-Oho Y."/>
            <person name="Suzuki H."/>
            <person name="Kawai J."/>
            <person name="Hayashizaki Y."/>
        </authorList>
    </citation>
    <scope>NUCLEOTIDE SEQUENCE [LARGE SCALE MRNA]</scope>
    <source>
        <strain>C57BL/6J</strain>
        <tissue>Embryonic liver</tissue>
    </source>
</reference>
<accession>P0C8B4</accession>
<organism>
    <name type="scientific">Mus musculus</name>
    <name type="common">Mouse</name>
    <dbReference type="NCBI Taxonomy" id="10090"/>
    <lineage>
        <taxon>Eukaryota</taxon>
        <taxon>Metazoa</taxon>
        <taxon>Chordata</taxon>
        <taxon>Craniata</taxon>
        <taxon>Vertebrata</taxon>
        <taxon>Euteleostomi</taxon>
        <taxon>Mammalia</taxon>
        <taxon>Eutheria</taxon>
        <taxon>Euarchontoglires</taxon>
        <taxon>Glires</taxon>
        <taxon>Rodentia</taxon>
        <taxon>Myomorpha</taxon>
        <taxon>Muroidea</taxon>
        <taxon>Muridae</taxon>
        <taxon>Murinae</taxon>
        <taxon>Mus</taxon>
        <taxon>Mus</taxon>
    </lineage>
</organism>
<evidence type="ECO:0000250" key="1">
    <source>
        <dbReference type="UniProtKB" id="Q9BXV9"/>
    </source>
</evidence>
<evidence type="ECO:0000256" key="2">
    <source>
        <dbReference type="SAM" id="MobiDB-lite"/>
    </source>
</evidence>
<evidence type="ECO:0000305" key="3"/>
<evidence type="ECO:0000312" key="4">
    <source>
        <dbReference type="MGI" id="MGI:4845848"/>
    </source>
</evidence>
<name>GON7_MOUSE</name>
<gene>
    <name evidence="4" type="primary">Gon7</name>
</gene>
<proteinExistence type="inferred from homology"/>
<protein>
    <recommendedName>
        <fullName evidence="3">EKC/KEOPS complex subunit GON7</fullName>
    </recommendedName>
</protein>